<proteinExistence type="inferred from homology"/>
<gene>
    <name evidence="1" type="primary">atpG</name>
    <name type="ordered locus">MMOB2090</name>
</gene>
<dbReference type="EMBL" id="AE017308">
    <property type="protein sequence ID" value="AAT27695.1"/>
    <property type="molecule type" value="Genomic_DNA"/>
</dbReference>
<dbReference type="RefSeq" id="WP_011264729.1">
    <property type="nucleotide sequence ID" value="NC_006908.1"/>
</dbReference>
<dbReference type="SMR" id="Q6KI81"/>
<dbReference type="STRING" id="267748.MMOB2090"/>
<dbReference type="KEGG" id="mmo:MMOB2090"/>
<dbReference type="eggNOG" id="COG0224">
    <property type="taxonomic scope" value="Bacteria"/>
</dbReference>
<dbReference type="HOGENOM" id="CLU_050669_0_1_14"/>
<dbReference type="OrthoDB" id="9812769at2"/>
<dbReference type="Proteomes" id="UP000009072">
    <property type="component" value="Chromosome"/>
</dbReference>
<dbReference type="GO" id="GO:0005886">
    <property type="term" value="C:plasma membrane"/>
    <property type="evidence" value="ECO:0007669"/>
    <property type="project" value="UniProtKB-SubCell"/>
</dbReference>
<dbReference type="GO" id="GO:0045259">
    <property type="term" value="C:proton-transporting ATP synthase complex"/>
    <property type="evidence" value="ECO:0007669"/>
    <property type="project" value="UniProtKB-KW"/>
</dbReference>
<dbReference type="GO" id="GO:0005524">
    <property type="term" value="F:ATP binding"/>
    <property type="evidence" value="ECO:0007669"/>
    <property type="project" value="UniProtKB-UniRule"/>
</dbReference>
<dbReference type="GO" id="GO:0046933">
    <property type="term" value="F:proton-transporting ATP synthase activity, rotational mechanism"/>
    <property type="evidence" value="ECO:0007669"/>
    <property type="project" value="UniProtKB-UniRule"/>
</dbReference>
<dbReference type="GO" id="GO:0042777">
    <property type="term" value="P:proton motive force-driven plasma membrane ATP synthesis"/>
    <property type="evidence" value="ECO:0007669"/>
    <property type="project" value="UniProtKB-UniRule"/>
</dbReference>
<dbReference type="CDD" id="cd12151">
    <property type="entry name" value="F1-ATPase_gamma"/>
    <property type="match status" value="1"/>
</dbReference>
<dbReference type="Gene3D" id="3.40.1380.10">
    <property type="match status" value="1"/>
</dbReference>
<dbReference type="Gene3D" id="1.10.287.80">
    <property type="entry name" value="ATP synthase, gamma subunit, helix hairpin domain"/>
    <property type="match status" value="1"/>
</dbReference>
<dbReference type="HAMAP" id="MF_00815">
    <property type="entry name" value="ATP_synth_gamma_bact"/>
    <property type="match status" value="1"/>
</dbReference>
<dbReference type="InterPro" id="IPR035968">
    <property type="entry name" value="ATP_synth_F1_ATPase_gsu"/>
</dbReference>
<dbReference type="InterPro" id="IPR000131">
    <property type="entry name" value="ATP_synth_F1_gsu"/>
</dbReference>
<dbReference type="NCBIfam" id="TIGR01146">
    <property type="entry name" value="ATPsyn_F1gamma"/>
    <property type="match status" value="1"/>
</dbReference>
<dbReference type="PANTHER" id="PTHR11693">
    <property type="entry name" value="ATP SYNTHASE GAMMA CHAIN"/>
    <property type="match status" value="1"/>
</dbReference>
<dbReference type="PANTHER" id="PTHR11693:SF22">
    <property type="entry name" value="ATP SYNTHASE SUBUNIT GAMMA, MITOCHONDRIAL"/>
    <property type="match status" value="1"/>
</dbReference>
<dbReference type="Pfam" id="PF00231">
    <property type="entry name" value="ATP-synt"/>
    <property type="match status" value="1"/>
</dbReference>
<dbReference type="PRINTS" id="PR00126">
    <property type="entry name" value="ATPASEGAMMA"/>
</dbReference>
<dbReference type="SUPFAM" id="SSF52943">
    <property type="entry name" value="ATP synthase (F1-ATPase), gamma subunit"/>
    <property type="match status" value="1"/>
</dbReference>
<reference key="1">
    <citation type="journal article" date="2004" name="Genome Res.">
        <title>The complete genome and proteome of Mycoplasma mobile.</title>
        <authorList>
            <person name="Jaffe J.D."/>
            <person name="Stange-Thomann N."/>
            <person name="Smith C."/>
            <person name="DeCaprio D."/>
            <person name="Fisher S."/>
            <person name="Butler J."/>
            <person name="Calvo S."/>
            <person name="Elkins T."/>
            <person name="FitzGerald M.G."/>
            <person name="Hafez N."/>
            <person name="Kodira C.D."/>
            <person name="Major J."/>
            <person name="Wang S."/>
            <person name="Wilkinson J."/>
            <person name="Nicol R."/>
            <person name="Nusbaum C."/>
            <person name="Birren B."/>
            <person name="Berg H.C."/>
            <person name="Church G.M."/>
        </authorList>
    </citation>
    <scope>NUCLEOTIDE SEQUENCE [LARGE SCALE GENOMIC DNA]</scope>
    <source>
        <strain>ATCC 43663 / NCTC 11711 / 163 K</strain>
    </source>
</reference>
<accession>Q6KI81</accession>
<sequence>MAELQKLSSRLKSVKVTRKITKAMELVAASKIRRAKESFFSNKEYFQIIQDIFDNLASKTEQIFLKKQMKFDKENNTNSILYIVINSDLGLCGAYNSSIAKEIKKEIKSKDKLFLIGKKGLLFLGKFKTQITNLDKVKEISTNYKNIKKISEKILSMFKSGDYKSIKIVYTKYVNAFTYLPTIKHALPILKSEKNINEATFSNLEFEPDPITIFQKAIPLYFSSLLYSCVLESHVSEVSSRRIAMENATKNADELGDQLKIELNTIRQSKITQEITEIVAGSETEI</sequence>
<name>ATPG_MYCM1</name>
<comment type="function">
    <text evidence="1">Produces ATP from ADP in the presence of a proton gradient across the membrane. The gamma chain is believed to be important in regulating ATPase activity and the flow of protons through the CF(0) complex.</text>
</comment>
<comment type="subunit">
    <text evidence="1">F-type ATPases have 2 components, CF(1) - the catalytic core - and CF(0) - the membrane proton channel. CF(1) has five subunits: alpha(3), beta(3), gamma(1), delta(1), epsilon(1). CF(0) has three main subunits: a, b and c.</text>
</comment>
<comment type="subcellular location">
    <subcellularLocation>
        <location evidence="1">Cell membrane</location>
        <topology evidence="1">Peripheral membrane protein</topology>
    </subcellularLocation>
</comment>
<comment type="similarity">
    <text evidence="1">Belongs to the ATPase gamma chain family.</text>
</comment>
<protein>
    <recommendedName>
        <fullName evidence="1">ATP synthase gamma chain</fullName>
    </recommendedName>
    <alternativeName>
        <fullName evidence="1">ATP synthase F1 sector gamma subunit</fullName>
    </alternativeName>
    <alternativeName>
        <fullName evidence="1">F-ATPase gamma subunit</fullName>
    </alternativeName>
</protein>
<organism>
    <name type="scientific">Mycoplasma mobile (strain ATCC 43663 / 163K / NCTC 11711)</name>
    <name type="common">Mesomycoplasma mobile</name>
    <dbReference type="NCBI Taxonomy" id="267748"/>
    <lineage>
        <taxon>Bacteria</taxon>
        <taxon>Bacillati</taxon>
        <taxon>Mycoplasmatota</taxon>
        <taxon>Mycoplasmoidales</taxon>
        <taxon>Metamycoplasmataceae</taxon>
        <taxon>Mesomycoplasma</taxon>
    </lineage>
</organism>
<keyword id="KW-0066">ATP synthesis</keyword>
<keyword id="KW-1003">Cell membrane</keyword>
<keyword id="KW-0139">CF(1)</keyword>
<keyword id="KW-0375">Hydrogen ion transport</keyword>
<keyword id="KW-0406">Ion transport</keyword>
<keyword id="KW-0472">Membrane</keyword>
<keyword id="KW-1185">Reference proteome</keyword>
<keyword id="KW-0813">Transport</keyword>
<feature type="chain" id="PRO_0000073321" description="ATP synthase gamma chain">
    <location>
        <begin position="1"/>
        <end position="286"/>
    </location>
</feature>
<evidence type="ECO:0000255" key="1">
    <source>
        <dbReference type="HAMAP-Rule" id="MF_00815"/>
    </source>
</evidence>